<feature type="chain" id="PRO_1000020854" description="Protease HtpX homolog">
    <location>
        <begin position="1"/>
        <end position="293"/>
    </location>
</feature>
<feature type="transmembrane region" description="Helical" evidence="1">
    <location>
        <begin position="4"/>
        <end position="24"/>
    </location>
</feature>
<feature type="transmembrane region" description="Helical" evidence="1">
    <location>
        <begin position="38"/>
        <end position="58"/>
    </location>
</feature>
<feature type="transmembrane region" description="Helical" evidence="1">
    <location>
        <begin position="161"/>
        <end position="181"/>
    </location>
</feature>
<feature type="transmembrane region" description="Helical" evidence="1">
    <location>
        <begin position="198"/>
        <end position="218"/>
    </location>
</feature>
<feature type="active site" evidence="1">
    <location>
        <position position="147"/>
    </location>
</feature>
<feature type="binding site" evidence="1">
    <location>
        <position position="146"/>
    </location>
    <ligand>
        <name>Zn(2+)</name>
        <dbReference type="ChEBI" id="CHEBI:29105"/>
        <note>catalytic</note>
    </ligand>
</feature>
<feature type="binding site" evidence="1">
    <location>
        <position position="150"/>
    </location>
    <ligand>
        <name>Zn(2+)</name>
        <dbReference type="ChEBI" id="CHEBI:29105"/>
        <note>catalytic</note>
    </ligand>
</feature>
<feature type="binding site" evidence="1">
    <location>
        <position position="223"/>
    </location>
    <ligand>
        <name>Zn(2+)</name>
        <dbReference type="ChEBI" id="CHEBI:29105"/>
        <note>catalytic</note>
    </ligand>
</feature>
<dbReference type="EC" id="3.4.24.-" evidence="1"/>
<dbReference type="EMBL" id="BX640417">
    <property type="protein sequence ID" value="CAE42556.1"/>
    <property type="molecule type" value="Genomic_DNA"/>
</dbReference>
<dbReference type="RefSeq" id="NP_880922.1">
    <property type="nucleotide sequence ID" value="NC_002929.2"/>
</dbReference>
<dbReference type="RefSeq" id="WP_003813142.1">
    <property type="nucleotide sequence ID" value="NZ_CP039022.1"/>
</dbReference>
<dbReference type="SMR" id="Q7VWH2"/>
<dbReference type="STRING" id="257313.BP2282"/>
<dbReference type="MEROPS" id="M48.002"/>
<dbReference type="PaxDb" id="257313-BP2282"/>
<dbReference type="GeneID" id="93204230"/>
<dbReference type="KEGG" id="bpe:BP2282"/>
<dbReference type="PATRIC" id="fig|257313.5.peg.2461"/>
<dbReference type="eggNOG" id="COG0501">
    <property type="taxonomic scope" value="Bacteria"/>
</dbReference>
<dbReference type="HOGENOM" id="CLU_042266_1_0_4"/>
<dbReference type="Proteomes" id="UP000002676">
    <property type="component" value="Chromosome"/>
</dbReference>
<dbReference type="GO" id="GO:0005886">
    <property type="term" value="C:plasma membrane"/>
    <property type="evidence" value="ECO:0007669"/>
    <property type="project" value="UniProtKB-SubCell"/>
</dbReference>
<dbReference type="GO" id="GO:0004222">
    <property type="term" value="F:metalloendopeptidase activity"/>
    <property type="evidence" value="ECO:0007669"/>
    <property type="project" value="UniProtKB-UniRule"/>
</dbReference>
<dbReference type="GO" id="GO:0008270">
    <property type="term" value="F:zinc ion binding"/>
    <property type="evidence" value="ECO:0007669"/>
    <property type="project" value="UniProtKB-UniRule"/>
</dbReference>
<dbReference type="GO" id="GO:0006508">
    <property type="term" value="P:proteolysis"/>
    <property type="evidence" value="ECO:0007669"/>
    <property type="project" value="UniProtKB-KW"/>
</dbReference>
<dbReference type="CDD" id="cd07335">
    <property type="entry name" value="M48B_HtpX_like"/>
    <property type="match status" value="1"/>
</dbReference>
<dbReference type="Gene3D" id="3.30.2010.10">
    <property type="entry name" value="Metalloproteases ('zincins'), catalytic domain"/>
    <property type="match status" value="1"/>
</dbReference>
<dbReference type="HAMAP" id="MF_00188">
    <property type="entry name" value="Pept_M48_protease_HtpX"/>
    <property type="match status" value="1"/>
</dbReference>
<dbReference type="InterPro" id="IPR050083">
    <property type="entry name" value="HtpX_protease"/>
</dbReference>
<dbReference type="InterPro" id="IPR022919">
    <property type="entry name" value="Pept_M48_protease_HtpX"/>
</dbReference>
<dbReference type="InterPro" id="IPR001915">
    <property type="entry name" value="Peptidase_M48"/>
</dbReference>
<dbReference type="NCBIfam" id="NF003965">
    <property type="entry name" value="PRK05457.1"/>
    <property type="match status" value="1"/>
</dbReference>
<dbReference type="PANTHER" id="PTHR43221">
    <property type="entry name" value="PROTEASE HTPX"/>
    <property type="match status" value="1"/>
</dbReference>
<dbReference type="PANTHER" id="PTHR43221:SF1">
    <property type="entry name" value="PROTEASE HTPX"/>
    <property type="match status" value="1"/>
</dbReference>
<dbReference type="Pfam" id="PF01435">
    <property type="entry name" value="Peptidase_M48"/>
    <property type="match status" value="1"/>
</dbReference>
<protein>
    <recommendedName>
        <fullName evidence="1">Protease HtpX homolog</fullName>
        <ecNumber evidence="1">3.4.24.-</ecNumber>
    </recommendedName>
</protein>
<proteinExistence type="inferred from homology"/>
<evidence type="ECO:0000255" key="1">
    <source>
        <dbReference type="HAMAP-Rule" id="MF_00188"/>
    </source>
</evidence>
<name>HTPX_BORPE</name>
<reference key="1">
    <citation type="journal article" date="2003" name="Nat. Genet.">
        <title>Comparative analysis of the genome sequences of Bordetella pertussis, Bordetella parapertussis and Bordetella bronchiseptica.</title>
        <authorList>
            <person name="Parkhill J."/>
            <person name="Sebaihia M."/>
            <person name="Preston A."/>
            <person name="Murphy L.D."/>
            <person name="Thomson N.R."/>
            <person name="Harris D.E."/>
            <person name="Holden M.T.G."/>
            <person name="Churcher C.M."/>
            <person name="Bentley S.D."/>
            <person name="Mungall K.L."/>
            <person name="Cerdeno-Tarraga A.-M."/>
            <person name="Temple L."/>
            <person name="James K.D."/>
            <person name="Harris B."/>
            <person name="Quail M.A."/>
            <person name="Achtman M."/>
            <person name="Atkin R."/>
            <person name="Baker S."/>
            <person name="Basham D."/>
            <person name="Bason N."/>
            <person name="Cherevach I."/>
            <person name="Chillingworth T."/>
            <person name="Collins M."/>
            <person name="Cronin A."/>
            <person name="Davis P."/>
            <person name="Doggett J."/>
            <person name="Feltwell T."/>
            <person name="Goble A."/>
            <person name="Hamlin N."/>
            <person name="Hauser H."/>
            <person name="Holroyd S."/>
            <person name="Jagels K."/>
            <person name="Leather S."/>
            <person name="Moule S."/>
            <person name="Norberczak H."/>
            <person name="O'Neil S."/>
            <person name="Ormond D."/>
            <person name="Price C."/>
            <person name="Rabbinowitsch E."/>
            <person name="Rutter S."/>
            <person name="Sanders M."/>
            <person name="Saunders D."/>
            <person name="Seeger K."/>
            <person name="Sharp S."/>
            <person name="Simmonds M."/>
            <person name="Skelton J."/>
            <person name="Squares R."/>
            <person name="Squares S."/>
            <person name="Stevens K."/>
            <person name="Unwin L."/>
            <person name="Whitehead S."/>
            <person name="Barrell B.G."/>
            <person name="Maskell D.J."/>
        </authorList>
    </citation>
    <scope>NUCLEOTIDE SEQUENCE [LARGE SCALE GENOMIC DNA]</scope>
    <source>
        <strain>Tohama I / ATCC BAA-589 / NCTC 13251</strain>
    </source>
</reference>
<accession>Q7VWH2</accession>
<comment type="cofactor">
    <cofactor evidence="1">
        <name>Zn(2+)</name>
        <dbReference type="ChEBI" id="CHEBI:29105"/>
    </cofactor>
    <text evidence="1">Binds 1 zinc ion per subunit.</text>
</comment>
<comment type="subcellular location">
    <subcellularLocation>
        <location evidence="1">Cell inner membrane</location>
        <topology evidence="1">Multi-pass membrane protein</topology>
    </subcellularLocation>
</comment>
<comment type="similarity">
    <text evidence="1">Belongs to the peptidase M48B family.</text>
</comment>
<organism>
    <name type="scientific">Bordetella pertussis (strain Tohama I / ATCC BAA-589 / NCTC 13251)</name>
    <dbReference type="NCBI Taxonomy" id="257313"/>
    <lineage>
        <taxon>Bacteria</taxon>
        <taxon>Pseudomonadati</taxon>
        <taxon>Pseudomonadota</taxon>
        <taxon>Betaproteobacteria</taxon>
        <taxon>Burkholderiales</taxon>
        <taxon>Alcaligenaceae</taxon>
        <taxon>Bordetella</taxon>
    </lineage>
</organism>
<sequence>MKRIFLFLITNLAVMVVLSATMRILGVDRFLTAQGLNLTGLLIFSAVIGFTGAIISLLMSKPMAKWSTGARVIDPNAPANQREAWLLDTVHQLADRAGIGRPEVAIYQGEPNAFATGAFRNDSLVAVSTGLLDSMTEEEVAAVLGHEVAHVANGDMVTLTLIQGVVNTFVVFLARVVGYFVDRAILKNERGVGLGYYATVIVCEIVFGILASIIVAWFSRQREYRADAGSAHLMGSREPMIRALARLGGLEPGELPKSFEASGISGKNGISAMFASHPPIQARIAALQHARLG</sequence>
<gene>
    <name evidence="1" type="primary">htpX</name>
    <name type="ordered locus">BP2282</name>
</gene>
<keyword id="KW-0997">Cell inner membrane</keyword>
<keyword id="KW-1003">Cell membrane</keyword>
<keyword id="KW-0378">Hydrolase</keyword>
<keyword id="KW-0472">Membrane</keyword>
<keyword id="KW-0479">Metal-binding</keyword>
<keyword id="KW-0482">Metalloprotease</keyword>
<keyword id="KW-0645">Protease</keyword>
<keyword id="KW-1185">Reference proteome</keyword>
<keyword id="KW-0812">Transmembrane</keyword>
<keyword id="KW-1133">Transmembrane helix</keyword>
<keyword id="KW-0862">Zinc</keyword>